<evidence type="ECO:0000255" key="1">
    <source>
        <dbReference type="HAMAP-Rule" id="MF_00240"/>
    </source>
</evidence>
<protein>
    <recommendedName>
        <fullName evidence="1">Outer-membrane lipoprotein carrier protein</fullName>
    </recommendedName>
</protein>
<gene>
    <name evidence="1" type="primary">lolA</name>
    <name type="ordered locus">VFMJ11_0944</name>
</gene>
<feature type="signal peptide" evidence="1">
    <location>
        <begin position="1"/>
        <end position="17"/>
    </location>
</feature>
<feature type="chain" id="PRO_1000100729" description="Outer-membrane lipoprotein carrier protein">
    <location>
        <begin position="18"/>
        <end position="198"/>
    </location>
</feature>
<reference key="1">
    <citation type="submission" date="2008-08" db="EMBL/GenBank/DDBJ databases">
        <title>Complete sequence of Vibrio fischeri strain MJ11.</title>
        <authorList>
            <person name="Mandel M.J."/>
            <person name="Stabb E.V."/>
            <person name="Ruby E.G."/>
            <person name="Ferriera S."/>
            <person name="Johnson J."/>
            <person name="Kravitz S."/>
            <person name="Beeson K."/>
            <person name="Sutton G."/>
            <person name="Rogers Y.-H."/>
            <person name="Friedman R."/>
            <person name="Frazier M."/>
            <person name="Venter J.C."/>
        </authorList>
    </citation>
    <scope>NUCLEOTIDE SEQUENCE [LARGE SCALE GENOMIC DNA]</scope>
    <source>
        <strain>MJ11</strain>
    </source>
</reference>
<sequence length="198" mass="22216">MKKFLFSLCLLSSTVLASPQSELTERLNQNAGFEAGFTQKVLSPEGDVLMQGEGDVKILRPNLFRWHTQTPDENLLVTDGNTLWYYNPFVEQVTLMGLEKATTQTPFVLLTRNKASDWDNYSVSQNGDAFTVSPKADSAVKSEFIVRIQENGKVTGFSVVEQDGQRSDFDFTKFEAKKPAKNNFTFAIPDGVDIDDQR</sequence>
<dbReference type="EMBL" id="CP001139">
    <property type="protein sequence ID" value="ACH65636.1"/>
    <property type="molecule type" value="Genomic_DNA"/>
</dbReference>
<dbReference type="RefSeq" id="WP_012533185.1">
    <property type="nucleotide sequence ID" value="NC_011184.1"/>
</dbReference>
<dbReference type="SMR" id="B5FCK5"/>
<dbReference type="KEGG" id="vfm:VFMJ11_0944"/>
<dbReference type="HOGENOM" id="CLU_087560_1_1_6"/>
<dbReference type="Proteomes" id="UP000001857">
    <property type="component" value="Chromosome I"/>
</dbReference>
<dbReference type="GO" id="GO:0030288">
    <property type="term" value="C:outer membrane-bounded periplasmic space"/>
    <property type="evidence" value="ECO:0007669"/>
    <property type="project" value="TreeGrafter"/>
</dbReference>
<dbReference type="GO" id="GO:0044874">
    <property type="term" value="P:lipoprotein localization to outer membrane"/>
    <property type="evidence" value="ECO:0007669"/>
    <property type="project" value="UniProtKB-UniRule"/>
</dbReference>
<dbReference type="GO" id="GO:0042953">
    <property type="term" value="P:lipoprotein transport"/>
    <property type="evidence" value="ECO:0007669"/>
    <property type="project" value="InterPro"/>
</dbReference>
<dbReference type="CDD" id="cd16325">
    <property type="entry name" value="LolA"/>
    <property type="match status" value="1"/>
</dbReference>
<dbReference type="Gene3D" id="2.50.20.10">
    <property type="entry name" value="Lipoprotein localisation LolA/LolB/LppX"/>
    <property type="match status" value="1"/>
</dbReference>
<dbReference type="HAMAP" id="MF_00240">
    <property type="entry name" value="LolA"/>
    <property type="match status" value="1"/>
</dbReference>
<dbReference type="InterPro" id="IPR029046">
    <property type="entry name" value="LolA/LolB/LppX"/>
</dbReference>
<dbReference type="InterPro" id="IPR004564">
    <property type="entry name" value="OM_lipoprot_carrier_LolA-like"/>
</dbReference>
<dbReference type="InterPro" id="IPR018323">
    <property type="entry name" value="OM_lipoprot_carrier_LolA_Pbac"/>
</dbReference>
<dbReference type="NCBIfam" id="TIGR00547">
    <property type="entry name" value="lolA"/>
    <property type="match status" value="1"/>
</dbReference>
<dbReference type="PANTHER" id="PTHR35869">
    <property type="entry name" value="OUTER-MEMBRANE LIPOPROTEIN CARRIER PROTEIN"/>
    <property type="match status" value="1"/>
</dbReference>
<dbReference type="PANTHER" id="PTHR35869:SF1">
    <property type="entry name" value="OUTER-MEMBRANE LIPOPROTEIN CARRIER PROTEIN"/>
    <property type="match status" value="1"/>
</dbReference>
<dbReference type="Pfam" id="PF03548">
    <property type="entry name" value="LolA"/>
    <property type="match status" value="1"/>
</dbReference>
<dbReference type="SUPFAM" id="SSF89392">
    <property type="entry name" value="Prokaryotic lipoproteins and lipoprotein localization factors"/>
    <property type="match status" value="1"/>
</dbReference>
<comment type="function">
    <text evidence="1">Participates in the translocation of lipoproteins from the inner membrane to the outer membrane. Only forms a complex with a lipoprotein if the residue after the N-terminal Cys is not an aspartate (The Asp acts as a targeting signal to indicate that the lipoprotein should stay in the inner membrane).</text>
</comment>
<comment type="subunit">
    <text evidence="1">Monomer.</text>
</comment>
<comment type="subcellular location">
    <subcellularLocation>
        <location evidence="1">Periplasm</location>
    </subcellularLocation>
</comment>
<comment type="similarity">
    <text evidence="1">Belongs to the LolA family.</text>
</comment>
<accession>B5FCK5</accession>
<name>LOLA_ALIFM</name>
<keyword id="KW-0143">Chaperone</keyword>
<keyword id="KW-0574">Periplasm</keyword>
<keyword id="KW-0653">Protein transport</keyword>
<keyword id="KW-0732">Signal</keyword>
<keyword id="KW-0813">Transport</keyword>
<organism>
    <name type="scientific">Aliivibrio fischeri (strain MJ11)</name>
    <name type="common">Vibrio fischeri</name>
    <dbReference type="NCBI Taxonomy" id="388396"/>
    <lineage>
        <taxon>Bacteria</taxon>
        <taxon>Pseudomonadati</taxon>
        <taxon>Pseudomonadota</taxon>
        <taxon>Gammaproteobacteria</taxon>
        <taxon>Vibrionales</taxon>
        <taxon>Vibrionaceae</taxon>
        <taxon>Aliivibrio</taxon>
    </lineage>
</organism>
<proteinExistence type="inferred from homology"/>